<comment type="function">
    <text evidence="1">Catalyzes the NADPH-dependent rearrangement and reduction of 1-deoxy-D-xylulose-5-phosphate (DXP) to 2-C-methyl-D-erythritol 4-phosphate (MEP).</text>
</comment>
<comment type="catalytic activity">
    <reaction evidence="1">
        <text>2-C-methyl-D-erythritol 4-phosphate + NADP(+) = 1-deoxy-D-xylulose 5-phosphate + NADPH + H(+)</text>
        <dbReference type="Rhea" id="RHEA:13717"/>
        <dbReference type="ChEBI" id="CHEBI:15378"/>
        <dbReference type="ChEBI" id="CHEBI:57783"/>
        <dbReference type="ChEBI" id="CHEBI:57792"/>
        <dbReference type="ChEBI" id="CHEBI:58262"/>
        <dbReference type="ChEBI" id="CHEBI:58349"/>
        <dbReference type="EC" id="1.1.1.267"/>
    </reaction>
    <physiologicalReaction direction="right-to-left" evidence="1">
        <dbReference type="Rhea" id="RHEA:13719"/>
    </physiologicalReaction>
</comment>
<comment type="cofactor">
    <cofactor evidence="1">
        <name>Mg(2+)</name>
        <dbReference type="ChEBI" id="CHEBI:18420"/>
    </cofactor>
    <cofactor evidence="1">
        <name>Mn(2+)</name>
        <dbReference type="ChEBI" id="CHEBI:29035"/>
    </cofactor>
</comment>
<comment type="pathway">
    <text evidence="1">Isoprenoid biosynthesis; isopentenyl diphosphate biosynthesis via DXP pathway; isopentenyl diphosphate from 1-deoxy-D-xylulose 5-phosphate: step 1/6.</text>
</comment>
<comment type="similarity">
    <text evidence="1">Belongs to the DXR family.</text>
</comment>
<dbReference type="EC" id="1.1.1.267" evidence="1"/>
<dbReference type="EMBL" id="CU633749">
    <property type="protein sequence ID" value="CAQ69628.1"/>
    <property type="molecule type" value="Genomic_DNA"/>
</dbReference>
<dbReference type="RefSeq" id="WP_012352948.1">
    <property type="nucleotide sequence ID" value="NC_010528.1"/>
</dbReference>
<dbReference type="SMR" id="B3R2B1"/>
<dbReference type="GeneID" id="29761322"/>
<dbReference type="KEGG" id="cti:RALTA_A1685"/>
<dbReference type="eggNOG" id="COG0743">
    <property type="taxonomic scope" value="Bacteria"/>
</dbReference>
<dbReference type="HOGENOM" id="CLU_035714_4_0_4"/>
<dbReference type="BioCyc" id="CTAI977880:RALTA_RS08100-MONOMER"/>
<dbReference type="UniPathway" id="UPA00056">
    <property type="reaction ID" value="UER00092"/>
</dbReference>
<dbReference type="Proteomes" id="UP000001692">
    <property type="component" value="Chromosome 1"/>
</dbReference>
<dbReference type="GO" id="GO:0030604">
    <property type="term" value="F:1-deoxy-D-xylulose-5-phosphate reductoisomerase activity"/>
    <property type="evidence" value="ECO:0007669"/>
    <property type="project" value="UniProtKB-UniRule"/>
</dbReference>
<dbReference type="GO" id="GO:0030145">
    <property type="term" value="F:manganese ion binding"/>
    <property type="evidence" value="ECO:0007669"/>
    <property type="project" value="TreeGrafter"/>
</dbReference>
<dbReference type="GO" id="GO:0070402">
    <property type="term" value="F:NADPH binding"/>
    <property type="evidence" value="ECO:0007669"/>
    <property type="project" value="InterPro"/>
</dbReference>
<dbReference type="GO" id="GO:0051484">
    <property type="term" value="P:isopentenyl diphosphate biosynthetic process, methylerythritol 4-phosphate pathway involved in terpenoid biosynthetic process"/>
    <property type="evidence" value="ECO:0007669"/>
    <property type="project" value="TreeGrafter"/>
</dbReference>
<dbReference type="FunFam" id="3.40.50.720:FF:000045">
    <property type="entry name" value="1-deoxy-D-xylulose 5-phosphate reductoisomerase"/>
    <property type="match status" value="1"/>
</dbReference>
<dbReference type="Gene3D" id="1.10.1740.10">
    <property type="match status" value="1"/>
</dbReference>
<dbReference type="Gene3D" id="3.40.50.720">
    <property type="entry name" value="NAD(P)-binding Rossmann-like Domain"/>
    <property type="match status" value="1"/>
</dbReference>
<dbReference type="HAMAP" id="MF_00183">
    <property type="entry name" value="DXP_reductoisom"/>
    <property type="match status" value="1"/>
</dbReference>
<dbReference type="InterPro" id="IPR003821">
    <property type="entry name" value="DXP_reductoisomerase"/>
</dbReference>
<dbReference type="InterPro" id="IPR013644">
    <property type="entry name" value="DXP_reductoisomerase_C"/>
</dbReference>
<dbReference type="InterPro" id="IPR013512">
    <property type="entry name" value="DXP_reductoisomerase_N"/>
</dbReference>
<dbReference type="InterPro" id="IPR026877">
    <property type="entry name" value="DXPR_C"/>
</dbReference>
<dbReference type="InterPro" id="IPR036169">
    <property type="entry name" value="DXPR_C_sf"/>
</dbReference>
<dbReference type="InterPro" id="IPR036291">
    <property type="entry name" value="NAD(P)-bd_dom_sf"/>
</dbReference>
<dbReference type="NCBIfam" id="TIGR00243">
    <property type="entry name" value="Dxr"/>
    <property type="match status" value="1"/>
</dbReference>
<dbReference type="NCBIfam" id="NF003938">
    <property type="entry name" value="PRK05447.1-1"/>
    <property type="match status" value="1"/>
</dbReference>
<dbReference type="NCBIfam" id="NF009114">
    <property type="entry name" value="PRK12464.1"/>
    <property type="match status" value="1"/>
</dbReference>
<dbReference type="PANTHER" id="PTHR30525">
    <property type="entry name" value="1-DEOXY-D-XYLULOSE 5-PHOSPHATE REDUCTOISOMERASE"/>
    <property type="match status" value="1"/>
</dbReference>
<dbReference type="PANTHER" id="PTHR30525:SF0">
    <property type="entry name" value="1-DEOXY-D-XYLULOSE 5-PHOSPHATE REDUCTOISOMERASE, CHLOROPLASTIC"/>
    <property type="match status" value="1"/>
</dbReference>
<dbReference type="Pfam" id="PF08436">
    <property type="entry name" value="DXP_redisom_C"/>
    <property type="match status" value="1"/>
</dbReference>
<dbReference type="Pfam" id="PF02670">
    <property type="entry name" value="DXP_reductoisom"/>
    <property type="match status" value="1"/>
</dbReference>
<dbReference type="Pfam" id="PF13288">
    <property type="entry name" value="DXPR_C"/>
    <property type="match status" value="1"/>
</dbReference>
<dbReference type="PIRSF" id="PIRSF006205">
    <property type="entry name" value="Dxp_reductismrs"/>
    <property type="match status" value="1"/>
</dbReference>
<dbReference type="SUPFAM" id="SSF69055">
    <property type="entry name" value="1-deoxy-D-xylulose-5-phosphate reductoisomerase, C-terminal domain"/>
    <property type="match status" value="1"/>
</dbReference>
<dbReference type="SUPFAM" id="SSF55347">
    <property type="entry name" value="Glyceraldehyde-3-phosphate dehydrogenase-like, C-terminal domain"/>
    <property type="match status" value="1"/>
</dbReference>
<dbReference type="SUPFAM" id="SSF51735">
    <property type="entry name" value="NAD(P)-binding Rossmann-fold domains"/>
    <property type="match status" value="1"/>
</dbReference>
<accession>B3R2B1</accession>
<feature type="chain" id="PRO_1000098490" description="1-deoxy-D-xylulose 5-phosphate reductoisomerase">
    <location>
        <begin position="1"/>
        <end position="393"/>
    </location>
</feature>
<feature type="binding site" evidence="1">
    <location>
        <position position="10"/>
    </location>
    <ligand>
        <name>NADPH</name>
        <dbReference type="ChEBI" id="CHEBI:57783"/>
    </ligand>
</feature>
<feature type="binding site" evidence="1">
    <location>
        <position position="11"/>
    </location>
    <ligand>
        <name>NADPH</name>
        <dbReference type="ChEBI" id="CHEBI:57783"/>
    </ligand>
</feature>
<feature type="binding site" evidence="1">
    <location>
        <position position="12"/>
    </location>
    <ligand>
        <name>NADPH</name>
        <dbReference type="ChEBI" id="CHEBI:57783"/>
    </ligand>
</feature>
<feature type="binding site" evidence="1">
    <location>
        <position position="13"/>
    </location>
    <ligand>
        <name>NADPH</name>
        <dbReference type="ChEBI" id="CHEBI:57783"/>
    </ligand>
</feature>
<feature type="binding site" evidence="1">
    <location>
        <position position="37"/>
    </location>
    <ligand>
        <name>NADPH</name>
        <dbReference type="ChEBI" id="CHEBI:57783"/>
    </ligand>
</feature>
<feature type="binding site" evidence="1">
    <location>
        <position position="38"/>
    </location>
    <ligand>
        <name>NADPH</name>
        <dbReference type="ChEBI" id="CHEBI:57783"/>
    </ligand>
</feature>
<feature type="binding site" evidence="1">
    <location>
        <position position="124"/>
    </location>
    <ligand>
        <name>NADPH</name>
        <dbReference type="ChEBI" id="CHEBI:57783"/>
    </ligand>
</feature>
<feature type="binding site" evidence="1">
    <location>
        <position position="125"/>
    </location>
    <ligand>
        <name>1-deoxy-D-xylulose 5-phosphate</name>
        <dbReference type="ChEBI" id="CHEBI:57792"/>
    </ligand>
</feature>
<feature type="binding site" evidence="1">
    <location>
        <position position="126"/>
    </location>
    <ligand>
        <name>NADPH</name>
        <dbReference type="ChEBI" id="CHEBI:57783"/>
    </ligand>
</feature>
<feature type="binding site" evidence="1">
    <location>
        <position position="150"/>
    </location>
    <ligand>
        <name>Mn(2+)</name>
        <dbReference type="ChEBI" id="CHEBI:29035"/>
    </ligand>
</feature>
<feature type="binding site" evidence="1">
    <location>
        <position position="151"/>
    </location>
    <ligand>
        <name>1-deoxy-D-xylulose 5-phosphate</name>
        <dbReference type="ChEBI" id="CHEBI:57792"/>
    </ligand>
</feature>
<feature type="binding site" evidence="1">
    <location>
        <position position="152"/>
    </location>
    <ligand>
        <name>1-deoxy-D-xylulose 5-phosphate</name>
        <dbReference type="ChEBI" id="CHEBI:57792"/>
    </ligand>
</feature>
<feature type="binding site" evidence="1">
    <location>
        <position position="152"/>
    </location>
    <ligand>
        <name>Mn(2+)</name>
        <dbReference type="ChEBI" id="CHEBI:29035"/>
    </ligand>
</feature>
<feature type="binding site" evidence="1">
    <location>
        <position position="179"/>
    </location>
    <ligand>
        <name>1-deoxy-D-xylulose 5-phosphate</name>
        <dbReference type="ChEBI" id="CHEBI:57792"/>
    </ligand>
</feature>
<feature type="binding site" evidence="1">
    <location>
        <position position="202"/>
    </location>
    <ligand>
        <name>1-deoxy-D-xylulose 5-phosphate</name>
        <dbReference type="ChEBI" id="CHEBI:57792"/>
    </ligand>
</feature>
<feature type="binding site" evidence="1">
    <location>
        <position position="208"/>
    </location>
    <ligand>
        <name>NADPH</name>
        <dbReference type="ChEBI" id="CHEBI:57783"/>
    </ligand>
</feature>
<feature type="binding site" evidence="1">
    <location>
        <position position="215"/>
    </location>
    <ligand>
        <name>1-deoxy-D-xylulose 5-phosphate</name>
        <dbReference type="ChEBI" id="CHEBI:57792"/>
    </ligand>
</feature>
<feature type="binding site" evidence="1">
    <location>
        <position position="220"/>
    </location>
    <ligand>
        <name>1-deoxy-D-xylulose 5-phosphate</name>
        <dbReference type="ChEBI" id="CHEBI:57792"/>
    </ligand>
</feature>
<feature type="binding site" evidence="1">
    <location>
        <position position="221"/>
    </location>
    <ligand>
        <name>1-deoxy-D-xylulose 5-phosphate</name>
        <dbReference type="ChEBI" id="CHEBI:57792"/>
    </ligand>
</feature>
<feature type="binding site" evidence="1">
    <location>
        <position position="224"/>
    </location>
    <ligand>
        <name>1-deoxy-D-xylulose 5-phosphate</name>
        <dbReference type="ChEBI" id="CHEBI:57792"/>
    </ligand>
</feature>
<feature type="binding site" evidence="1">
    <location>
        <position position="224"/>
    </location>
    <ligand>
        <name>Mn(2+)</name>
        <dbReference type="ChEBI" id="CHEBI:29035"/>
    </ligand>
</feature>
<protein>
    <recommendedName>
        <fullName evidence="1">1-deoxy-D-xylulose 5-phosphate reductoisomerase</fullName>
        <shortName evidence="1">DXP reductoisomerase</shortName>
        <ecNumber evidence="1">1.1.1.267</ecNumber>
    </recommendedName>
    <alternativeName>
        <fullName evidence="1">1-deoxyxylulose-5-phosphate reductoisomerase</fullName>
    </alternativeName>
    <alternativeName>
        <fullName evidence="1">2-C-methyl-D-erythritol 4-phosphate synthase</fullName>
    </alternativeName>
</protein>
<organism>
    <name type="scientific">Cupriavidus taiwanensis (strain DSM 17343 / BCRC 17206 / CCUG 44338 / CIP 107171 / LMG 19424 / R1)</name>
    <name type="common">Ralstonia taiwanensis (strain LMG 19424)</name>
    <dbReference type="NCBI Taxonomy" id="977880"/>
    <lineage>
        <taxon>Bacteria</taxon>
        <taxon>Pseudomonadati</taxon>
        <taxon>Pseudomonadota</taxon>
        <taxon>Betaproteobacteria</taxon>
        <taxon>Burkholderiales</taxon>
        <taxon>Burkholderiaceae</taxon>
        <taxon>Cupriavidus</taxon>
    </lineage>
</organism>
<keyword id="KW-0414">Isoprene biosynthesis</keyword>
<keyword id="KW-0464">Manganese</keyword>
<keyword id="KW-0479">Metal-binding</keyword>
<keyword id="KW-0521">NADP</keyword>
<keyword id="KW-0560">Oxidoreductase</keyword>
<reference key="1">
    <citation type="journal article" date="2008" name="Genome Res.">
        <title>Genome sequence of the beta-rhizobium Cupriavidus taiwanensis and comparative genomics of rhizobia.</title>
        <authorList>
            <person name="Amadou C."/>
            <person name="Pascal G."/>
            <person name="Mangenot S."/>
            <person name="Glew M."/>
            <person name="Bontemps C."/>
            <person name="Capela D."/>
            <person name="Carrere S."/>
            <person name="Cruveiller S."/>
            <person name="Dossat C."/>
            <person name="Lajus A."/>
            <person name="Marchetti M."/>
            <person name="Poinsot V."/>
            <person name="Rouy Z."/>
            <person name="Servin B."/>
            <person name="Saad M."/>
            <person name="Schenowitz C."/>
            <person name="Barbe V."/>
            <person name="Batut J."/>
            <person name="Medigue C."/>
            <person name="Masson-Boivin C."/>
        </authorList>
    </citation>
    <scope>NUCLEOTIDE SEQUENCE [LARGE SCALE GENOMIC DNA]</scope>
    <source>
        <strain>DSM 17343 / BCRC 17206 / CCUG 44338 / CIP 107171 / LMG 19424 / R1</strain>
    </source>
</reference>
<proteinExistence type="inferred from homology"/>
<name>DXR_CUPTR</name>
<gene>
    <name evidence="1" type="primary">dxr</name>
    <name type="ordered locus">RALTA_A1685</name>
</gene>
<sequence length="393" mass="41406">MHRITILGATGSIGESTLDVIRRHPGRYAAHALSAHRQVRKLADQCIEFRPARAVVGTAEAARELETLLRDASVATEVSYGEAALESIAADAQTDAVMAAIVGAAGLRPTLAAARAGKRVLLANKEALVMSGRIFMDAVREHGATLLPIDSEHNAIFQCLPADDPRYGRGVAKVLLTASGGPFRTRDPATLHDISPDQACAHPNWVMGRKISVDSATMMNKGLEVIEAHWLFGAPAERIEVLIHPQSIVHSMVAYTDGSVLAQLGNPDMRTPIAYGLAYPERIDAGVTPLDLTLAGGLHFEKPDLARFPCLGLAFDALRAAGVAPAVLNAANEVGVEAFLAGQVRFTDIAGIVRQVLEEAPSGPADTLEAVLAADALAREAARAGVTARAAAR</sequence>
<evidence type="ECO:0000255" key="1">
    <source>
        <dbReference type="HAMAP-Rule" id="MF_00183"/>
    </source>
</evidence>